<protein>
    <recommendedName>
        <fullName>Chemotaxis protein CheA</fullName>
        <ecNumber>2.7.13.3</ecNumber>
    </recommendedName>
</protein>
<evidence type="ECO:0000250" key="1"/>
<evidence type="ECO:0000255" key="2">
    <source>
        <dbReference type="PROSITE-ProRule" id="PRU00052"/>
    </source>
</evidence>
<evidence type="ECO:0000255" key="3">
    <source>
        <dbReference type="PROSITE-ProRule" id="PRU00107"/>
    </source>
</evidence>
<evidence type="ECO:0000255" key="4">
    <source>
        <dbReference type="PROSITE-ProRule" id="PRU00110"/>
    </source>
</evidence>
<evidence type="ECO:0000305" key="5"/>
<accession>Q92DW2</accession>
<organism>
    <name type="scientific">Listeria innocua serovar 6a (strain ATCC BAA-680 / CLIP 11262)</name>
    <dbReference type="NCBI Taxonomy" id="272626"/>
    <lineage>
        <taxon>Bacteria</taxon>
        <taxon>Bacillati</taxon>
        <taxon>Bacillota</taxon>
        <taxon>Bacilli</taxon>
        <taxon>Bacillales</taxon>
        <taxon>Listeriaceae</taxon>
        <taxon>Listeria</taxon>
    </lineage>
</organism>
<feature type="chain" id="PRO_0000074714" description="Chemotaxis protein CheA">
    <location>
        <begin position="1"/>
        <end position="618"/>
    </location>
</feature>
<feature type="domain" description="HPt" evidence="4">
    <location>
        <begin position="1"/>
        <end position="102"/>
    </location>
</feature>
<feature type="domain" description="Histidine kinase" evidence="3">
    <location>
        <begin position="233"/>
        <end position="488"/>
    </location>
</feature>
<feature type="domain" description="CheW-like" evidence="2">
    <location>
        <begin position="490"/>
        <end position="618"/>
    </location>
</feature>
<feature type="modified residue" description="Phosphohistidine; by autocatalysis" evidence="3">
    <location>
        <position position="45"/>
    </location>
</feature>
<proteinExistence type="inferred from homology"/>
<sequence length="618" mass="68669">MTTNMLDLFIEEASEHLQALNDNLLQLEKDPTNGQLVSEIFRSAHTFKGMSATMGFQQVADLTHAMENVLDEVRNNRLAVTEHLVDIIFTCTSHLETMVSDIQHGGQGAADISKTVADLEALLHPEQETDTAVEKTYRIAIQIEEAAILKAVRAVMCLERLAEMGIISETTPDREAIELEEFEHSFEVVLETAQTKEEIEAVILDISEIEKVTVTEEVEEVQIIEPIKKAAKQTTKRLENKTIRVQLEKIEKLMNVFEESVIERARIDEIAEKTNNKELMEHLGRFSSISKEIQNGLLNMRMVPVDSVFNRFPKMVRTLAKELGKKIDLVIEGADTEVDKIVIDEIGDPLVHLIRNSVDHGAETVEVRRKNGKNETATINLKAFHSGNNVVIEIVDDGAGINKRKVLEKAIAKNVVTRAESTKMTDSEIFDLLFDSGFSTADQVSDLSGRGVGLDVVRNTILKIGGKISVESSENAGSTFRIEIPLTLSIIQSMLVATSERRYAVPLANVAEAITINPADIQHVHGKDLINYRETIIEVLDLGECFHETPLTDTDELLLLVVKNAKRTFGLIIKDIIGQREIVLKTLGGFFSESQIAFSGATILGDGRVVLILNLETF</sequence>
<keyword id="KW-0067">ATP-binding</keyword>
<keyword id="KW-0145">Chemotaxis</keyword>
<keyword id="KW-0963">Cytoplasm</keyword>
<keyword id="KW-0418">Kinase</keyword>
<keyword id="KW-0547">Nucleotide-binding</keyword>
<keyword id="KW-0597">Phosphoprotein</keyword>
<keyword id="KW-0808">Transferase</keyword>
<keyword id="KW-0902">Two-component regulatory system</keyword>
<comment type="function">
    <text evidence="1">Involved in the transmission of sensory signals from the chemoreceptors to the flagellar motors. CheA is autophosphorylated; it can transfer its phosphate group to either CheB or CheY (By similarity).</text>
</comment>
<comment type="catalytic activity">
    <reaction>
        <text>ATP + protein L-histidine = ADP + protein N-phospho-L-histidine.</text>
        <dbReference type="EC" id="2.7.13.3"/>
    </reaction>
</comment>
<comment type="subcellular location">
    <subcellularLocation>
        <location evidence="5">Cytoplasm</location>
    </subcellularLocation>
</comment>
<gene>
    <name type="primary">cheA</name>
    <name type="ordered locus">lin0700</name>
</gene>
<name>CHEA_LISIN</name>
<dbReference type="EC" id="2.7.13.3"/>
<dbReference type="EMBL" id="AL596166">
    <property type="protein sequence ID" value="CAC95932.1"/>
    <property type="molecule type" value="Genomic_DNA"/>
</dbReference>
<dbReference type="PIR" id="AD1520">
    <property type="entry name" value="AD1520"/>
</dbReference>
<dbReference type="RefSeq" id="WP_010990559.1">
    <property type="nucleotide sequence ID" value="NC_003212.1"/>
</dbReference>
<dbReference type="SMR" id="Q92DW2"/>
<dbReference type="STRING" id="272626.gene:17565027"/>
<dbReference type="KEGG" id="lin:cheA"/>
<dbReference type="eggNOG" id="COG0643">
    <property type="taxonomic scope" value="Bacteria"/>
</dbReference>
<dbReference type="eggNOG" id="COG2198">
    <property type="taxonomic scope" value="Bacteria"/>
</dbReference>
<dbReference type="HOGENOM" id="CLU_000650_3_6_9"/>
<dbReference type="OrthoDB" id="9803176at2"/>
<dbReference type="BRENDA" id="2.7.13.3">
    <property type="organism ID" value="3044"/>
</dbReference>
<dbReference type="Proteomes" id="UP000002513">
    <property type="component" value="Chromosome"/>
</dbReference>
<dbReference type="GO" id="GO:0005737">
    <property type="term" value="C:cytoplasm"/>
    <property type="evidence" value="ECO:0007669"/>
    <property type="project" value="UniProtKB-SubCell"/>
</dbReference>
<dbReference type="GO" id="GO:0005524">
    <property type="term" value="F:ATP binding"/>
    <property type="evidence" value="ECO:0007669"/>
    <property type="project" value="UniProtKB-KW"/>
</dbReference>
<dbReference type="GO" id="GO:0000155">
    <property type="term" value="F:phosphorelay sensor kinase activity"/>
    <property type="evidence" value="ECO:0007669"/>
    <property type="project" value="InterPro"/>
</dbReference>
<dbReference type="GO" id="GO:0006935">
    <property type="term" value="P:chemotaxis"/>
    <property type="evidence" value="ECO:0007669"/>
    <property type="project" value="UniProtKB-KW"/>
</dbReference>
<dbReference type="CDD" id="cd00731">
    <property type="entry name" value="CheA_reg"/>
    <property type="match status" value="1"/>
</dbReference>
<dbReference type="CDD" id="cd16916">
    <property type="entry name" value="HATPase_CheA-like"/>
    <property type="match status" value="1"/>
</dbReference>
<dbReference type="CDD" id="cd00088">
    <property type="entry name" value="HPT"/>
    <property type="match status" value="1"/>
</dbReference>
<dbReference type="FunFam" id="3.30.565.10:FF:000016">
    <property type="entry name" value="Chemotaxis protein CheA, putative"/>
    <property type="match status" value="1"/>
</dbReference>
<dbReference type="Gene3D" id="1.10.287.560">
    <property type="entry name" value="Histidine kinase CheA-like, homodimeric domain"/>
    <property type="match status" value="1"/>
</dbReference>
<dbReference type="Gene3D" id="3.30.70.1110">
    <property type="entry name" value="Histidine kinase CheA-like, P2 response regulator-binding domain"/>
    <property type="match status" value="1"/>
</dbReference>
<dbReference type="Gene3D" id="3.30.565.10">
    <property type="entry name" value="Histidine kinase-like ATPase, C-terminal domain"/>
    <property type="match status" value="1"/>
</dbReference>
<dbReference type="Gene3D" id="1.20.120.160">
    <property type="entry name" value="HPT domain"/>
    <property type="match status" value="1"/>
</dbReference>
<dbReference type="Gene3D" id="2.30.30.40">
    <property type="entry name" value="SH3 Domains"/>
    <property type="match status" value="1"/>
</dbReference>
<dbReference type="InterPro" id="IPR051315">
    <property type="entry name" value="Bact_Chemotaxis_CheA"/>
</dbReference>
<dbReference type="InterPro" id="IPR004105">
    <property type="entry name" value="CheA-like_dim"/>
</dbReference>
<dbReference type="InterPro" id="IPR037006">
    <property type="entry name" value="CheA-like_homodim_sf"/>
</dbReference>
<dbReference type="InterPro" id="IPR037052">
    <property type="entry name" value="CheA-like_P2_sf"/>
</dbReference>
<dbReference type="InterPro" id="IPR010808">
    <property type="entry name" value="CheA_P2-bd"/>
</dbReference>
<dbReference type="InterPro" id="IPR036061">
    <property type="entry name" value="CheW-like_dom_sf"/>
</dbReference>
<dbReference type="InterPro" id="IPR002545">
    <property type="entry name" value="CheW-lke_dom"/>
</dbReference>
<dbReference type="InterPro" id="IPR035891">
    <property type="entry name" value="CheY-binding_CheA"/>
</dbReference>
<dbReference type="InterPro" id="IPR036890">
    <property type="entry name" value="HATPase_C_sf"/>
</dbReference>
<dbReference type="InterPro" id="IPR005467">
    <property type="entry name" value="His_kinase_dom"/>
</dbReference>
<dbReference type="InterPro" id="IPR036097">
    <property type="entry name" value="HisK_dim/P_sf"/>
</dbReference>
<dbReference type="InterPro" id="IPR036641">
    <property type="entry name" value="HPT_dom_sf"/>
</dbReference>
<dbReference type="InterPro" id="IPR004358">
    <property type="entry name" value="Sig_transdc_His_kin-like_C"/>
</dbReference>
<dbReference type="InterPro" id="IPR008207">
    <property type="entry name" value="Sig_transdc_His_kin_Hpt_dom"/>
</dbReference>
<dbReference type="PANTHER" id="PTHR43395:SF1">
    <property type="entry name" value="CHEMOTAXIS PROTEIN CHEA"/>
    <property type="match status" value="1"/>
</dbReference>
<dbReference type="PANTHER" id="PTHR43395">
    <property type="entry name" value="SENSOR HISTIDINE KINASE CHEA"/>
    <property type="match status" value="1"/>
</dbReference>
<dbReference type="Pfam" id="PF01584">
    <property type="entry name" value="CheW"/>
    <property type="match status" value="1"/>
</dbReference>
<dbReference type="Pfam" id="PF02895">
    <property type="entry name" value="H-kinase_dim"/>
    <property type="match status" value="1"/>
</dbReference>
<dbReference type="Pfam" id="PF02518">
    <property type="entry name" value="HATPase_c"/>
    <property type="match status" value="1"/>
</dbReference>
<dbReference type="Pfam" id="PF01627">
    <property type="entry name" value="Hpt"/>
    <property type="match status" value="1"/>
</dbReference>
<dbReference type="Pfam" id="PF07194">
    <property type="entry name" value="P2"/>
    <property type="match status" value="1"/>
</dbReference>
<dbReference type="PRINTS" id="PR00344">
    <property type="entry name" value="BCTRLSENSOR"/>
</dbReference>
<dbReference type="SMART" id="SM00260">
    <property type="entry name" value="CheW"/>
    <property type="match status" value="1"/>
</dbReference>
<dbReference type="SMART" id="SM01231">
    <property type="entry name" value="H-kinase_dim"/>
    <property type="match status" value="1"/>
</dbReference>
<dbReference type="SMART" id="SM00387">
    <property type="entry name" value="HATPase_c"/>
    <property type="match status" value="1"/>
</dbReference>
<dbReference type="SMART" id="SM00073">
    <property type="entry name" value="HPT"/>
    <property type="match status" value="1"/>
</dbReference>
<dbReference type="SUPFAM" id="SSF55874">
    <property type="entry name" value="ATPase domain of HSP90 chaperone/DNA topoisomerase II/histidine kinase"/>
    <property type="match status" value="1"/>
</dbReference>
<dbReference type="SUPFAM" id="SSF50341">
    <property type="entry name" value="CheW-like"/>
    <property type="match status" value="1"/>
</dbReference>
<dbReference type="SUPFAM" id="SSF55052">
    <property type="entry name" value="CheY-binding domain of CheA"/>
    <property type="match status" value="1"/>
</dbReference>
<dbReference type="SUPFAM" id="SSF47226">
    <property type="entry name" value="Histidine-containing phosphotransfer domain, HPT domain"/>
    <property type="match status" value="1"/>
</dbReference>
<dbReference type="SUPFAM" id="SSF47384">
    <property type="entry name" value="Homodimeric domain of signal transducing histidine kinase"/>
    <property type="match status" value="1"/>
</dbReference>
<dbReference type="PROSITE" id="PS50851">
    <property type="entry name" value="CHEW"/>
    <property type="match status" value="1"/>
</dbReference>
<dbReference type="PROSITE" id="PS50109">
    <property type="entry name" value="HIS_KIN"/>
    <property type="match status" value="1"/>
</dbReference>
<dbReference type="PROSITE" id="PS50894">
    <property type="entry name" value="HPT"/>
    <property type="match status" value="1"/>
</dbReference>
<reference key="1">
    <citation type="journal article" date="2001" name="Science">
        <title>Comparative genomics of Listeria species.</title>
        <authorList>
            <person name="Glaser P."/>
            <person name="Frangeul L."/>
            <person name="Buchrieser C."/>
            <person name="Rusniok C."/>
            <person name="Amend A."/>
            <person name="Baquero F."/>
            <person name="Berche P."/>
            <person name="Bloecker H."/>
            <person name="Brandt P."/>
            <person name="Chakraborty T."/>
            <person name="Charbit A."/>
            <person name="Chetouani F."/>
            <person name="Couve E."/>
            <person name="de Daruvar A."/>
            <person name="Dehoux P."/>
            <person name="Domann E."/>
            <person name="Dominguez-Bernal G."/>
            <person name="Duchaud E."/>
            <person name="Durant L."/>
            <person name="Dussurget O."/>
            <person name="Entian K.-D."/>
            <person name="Fsihi H."/>
            <person name="Garcia-del Portillo F."/>
            <person name="Garrido P."/>
            <person name="Gautier L."/>
            <person name="Goebel W."/>
            <person name="Gomez-Lopez N."/>
            <person name="Hain T."/>
            <person name="Hauf J."/>
            <person name="Jackson D."/>
            <person name="Jones L.-M."/>
            <person name="Kaerst U."/>
            <person name="Kreft J."/>
            <person name="Kuhn M."/>
            <person name="Kunst F."/>
            <person name="Kurapkat G."/>
            <person name="Madueno E."/>
            <person name="Maitournam A."/>
            <person name="Mata Vicente J."/>
            <person name="Ng E."/>
            <person name="Nedjari H."/>
            <person name="Nordsiek G."/>
            <person name="Novella S."/>
            <person name="de Pablos B."/>
            <person name="Perez-Diaz J.-C."/>
            <person name="Purcell R."/>
            <person name="Remmel B."/>
            <person name="Rose M."/>
            <person name="Schlueter T."/>
            <person name="Simoes N."/>
            <person name="Tierrez A."/>
            <person name="Vazquez-Boland J.-A."/>
            <person name="Voss H."/>
            <person name="Wehland J."/>
            <person name="Cossart P."/>
        </authorList>
    </citation>
    <scope>NUCLEOTIDE SEQUENCE [LARGE SCALE GENOMIC DNA]</scope>
    <source>
        <strain>ATCC BAA-680 / CLIP 11262</strain>
    </source>
</reference>